<keyword id="KW-0378">Hydrolase</keyword>
<keyword id="KW-0479">Metal-binding</keyword>
<keyword id="KW-0862">Zinc</keyword>
<organism>
    <name type="scientific">Salmonella agona (strain SL483)</name>
    <dbReference type="NCBI Taxonomy" id="454166"/>
    <lineage>
        <taxon>Bacteria</taxon>
        <taxon>Pseudomonadati</taxon>
        <taxon>Pseudomonadota</taxon>
        <taxon>Gammaproteobacteria</taxon>
        <taxon>Enterobacterales</taxon>
        <taxon>Enterobacteriaceae</taxon>
        <taxon>Salmonella</taxon>
    </lineage>
</organism>
<dbReference type="EC" id="3.5.4.5" evidence="1"/>
<dbReference type="EMBL" id="CP001138">
    <property type="protein sequence ID" value="ACH49505.1"/>
    <property type="molecule type" value="Genomic_DNA"/>
</dbReference>
<dbReference type="RefSeq" id="WP_000553527.1">
    <property type="nucleotide sequence ID" value="NC_011149.1"/>
</dbReference>
<dbReference type="SMR" id="B5EYN3"/>
<dbReference type="KEGG" id="sea:SeAg_B2329"/>
<dbReference type="HOGENOM" id="CLU_052424_0_0_6"/>
<dbReference type="Proteomes" id="UP000008819">
    <property type="component" value="Chromosome"/>
</dbReference>
<dbReference type="GO" id="GO:0005829">
    <property type="term" value="C:cytosol"/>
    <property type="evidence" value="ECO:0007669"/>
    <property type="project" value="TreeGrafter"/>
</dbReference>
<dbReference type="GO" id="GO:0004126">
    <property type="term" value="F:cytidine deaminase activity"/>
    <property type="evidence" value="ECO:0007669"/>
    <property type="project" value="UniProtKB-UniRule"/>
</dbReference>
<dbReference type="GO" id="GO:0042802">
    <property type="term" value="F:identical protein binding"/>
    <property type="evidence" value="ECO:0007669"/>
    <property type="project" value="UniProtKB-ARBA"/>
</dbReference>
<dbReference type="GO" id="GO:0008270">
    <property type="term" value="F:zinc ion binding"/>
    <property type="evidence" value="ECO:0007669"/>
    <property type="project" value="UniProtKB-UniRule"/>
</dbReference>
<dbReference type="GO" id="GO:0009972">
    <property type="term" value="P:cytidine deamination"/>
    <property type="evidence" value="ECO:0007669"/>
    <property type="project" value="InterPro"/>
</dbReference>
<dbReference type="CDD" id="cd01283">
    <property type="entry name" value="cytidine_deaminase"/>
    <property type="match status" value="2"/>
</dbReference>
<dbReference type="FunFam" id="3.40.140.10:FF:000006">
    <property type="entry name" value="Cytidine deaminase"/>
    <property type="match status" value="1"/>
</dbReference>
<dbReference type="FunFam" id="3.40.140.10:FF:000007">
    <property type="entry name" value="Cytidine deaminase"/>
    <property type="match status" value="1"/>
</dbReference>
<dbReference type="Gene3D" id="3.40.140.10">
    <property type="entry name" value="Cytidine Deaminase, domain 2"/>
    <property type="match status" value="2"/>
</dbReference>
<dbReference type="HAMAP" id="MF_01558">
    <property type="entry name" value="Cyt_deam"/>
    <property type="match status" value="1"/>
</dbReference>
<dbReference type="InterPro" id="IPR016192">
    <property type="entry name" value="APOBEC/CMP_deaminase_Zn-bd"/>
</dbReference>
<dbReference type="InterPro" id="IPR002125">
    <property type="entry name" value="CMP_dCMP_dom"/>
</dbReference>
<dbReference type="InterPro" id="IPR013171">
    <property type="entry name" value="Cyd/dCyd_deaminase_Zn-bd"/>
</dbReference>
<dbReference type="InterPro" id="IPR050202">
    <property type="entry name" value="Cyt/Deoxycyt_deaminase"/>
</dbReference>
<dbReference type="InterPro" id="IPR006263">
    <property type="entry name" value="Cyt_deam_dimer"/>
</dbReference>
<dbReference type="InterPro" id="IPR016193">
    <property type="entry name" value="Cytidine_deaminase-like"/>
</dbReference>
<dbReference type="InterPro" id="IPR020797">
    <property type="entry name" value="Cytidine_deaminase_bacteria"/>
</dbReference>
<dbReference type="NCBIfam" id="TIGR01355">
    <property type="entry name" value="cyt_deam_dimer"/>
    <property type="match status" value="1"/>
</dbReference>
<dbReference type="NCBIfam" id="NF006537">
    <property type="entry name" value="PRK09027.1"/>
    <property type="match status" value="1"/>
</dbReference>
<dbReference type="PANTHER" id="PTHR11644">
    <property type="entry name" value="CYTIDINE DEAMINASE"/>
    <property type="match status" value="1"/>
</dbReference>
<dbReference type="PANTHER" id="PTHR11644:SF2">
    <property type="entry name" value="CYTIDINE DEAMINASE"/>
    <property type="match status" value="1"/>
</dbReference>
<dbReference type="Pfam" id="PF00383">
    <property type="entry name" value="dCMP_cyt_deam_1"/>
    <property type="match status" value="1"/>
</dbReference>
<dbReference type="Pfam" id="PF08211">
    <property type="entry name" value="dCMP_cyt_deam_2"/>
    <property type="match status" value="1"/>
</dbReference>
<dbReference type="PIRSF" id="PIRSF006334">
    <property type="entry name" value="Cdd_plus_pseudo"/>
    <property type="match status" value="1"/>
</dbReference>
<dbReference type="SUPFAM" id="SSF53927">
    <property type="entry name" value="Cytidine deaminase-like"/>
    <property type="match status" value="2"/>
</dbReference>
<dbReference type="PROSITE" id="PS00903">
    <property type="entry name" value="CYT_DCMP_DEAMINASES_1"/>
    <property type="match status" value="1"/>
</dbReference>
<dbReference type="PROSITE" id="PS51747">
    <property type="entry name" value="CYT_DCMP_DEAMINASES_2"/>
    <property type="match status" value="2"/>
</dbReference>
<gene>
    <name evidence="1" type="primary">cdd</name>
    <name type="ordered locus">SeAg_B2329</name>
</gene>
<proteinExistence type="inferred from homology"/>
<feature type="chain" id="PRO_1000147107" description="Cytidine deaminase">
    <location>
        <begin position="1"/>
        <end position="294"/>
    </location>
</feature>
<feature type="domain" description="CMP/dCMP-type deaminase 1" evidence="2">
    <location>
        <begin position="48"/>
        <end position="168"/>
    </location>
</feature>
<feature type="domain" description="CMP/dCMP-type deaminase 2" evidence="2">
    <location>
        <begin position="186"/>
        <end position="294"/>
    </location>
</feature>
<feature type="active site" description="Proton donor" evidence="1">
    <location>
        <position position="104"/>
    </location>
</feature>
<feature type="binding site" evidence="1">
    <location>
        <begin position="89"/>
        <end position="91"/>
    </location>
    <ligand>
        <name>substrate</name>
    </ligand>
</feature>
<feature type="binding site" evidence="1">
    <location>
        <position position="102"/>
    </location>
    <ligand>
        <name>Zn(2+)</name>
        <dbReference type="ChEBI" id="CHEBI:29105"/>
        <note>catalytic</note>
    </ligand>
</feature>
<feature type="binding site" evidence="1">
    <location>
        <position position="129"/>
    </location>
    <ligand>
        <name>Zn(2+)</name>
        <dbReference type="ChEBI" id="CHEBI:29105"/>
        <note>catalytic</note>
    </ligand>
</feature>
<feature type="binding site" evidence="1">
    <location>
        <position position="132"/>
    </location>
    <ligand>
        <name>Zn(2+)</name>
        <dbReference type="ChEBI" id="CHEBI:29105"/>
        <note>catalytic</note>
    </ligand>
</feature>
<accession>B5EYN3</accession>
<evidence type="ECO:0000255" key="1">
    <source>
        <dbReference type="HAMAP-Rule" id="MF_01558"/>
    </source>
</evidence>
<evidence type="ECO:0000255" key="2">
    <source>
        <dbReference type="PROSITE-ProRule" id="PRU01083"/>
    </source>
</evidence>
<comment type="function">
    <text evidence="1">This enzyme scavenges exogenous and endogenous cytidine and 2'-deoxycytidine for UMP synthesis.</text>
</comment>
<comment type="catalytic activity">
    <reaction evidence="1">
        <text>cytidine + H2O + H(+) = uridine + NH4(+)</text>
        <dbReference type="Rhea" id="RHEA:16069"/>
        <dbReference type="ChEBI" id="CHEBI:15377"/>
        <dbReference type="ChEBI" id="CHEBI:15378"/>
        <dbReference type="ChEBI" id="CHEBI:16704"/>
        <dbReference type="ChEBI" id="CHEBI:17562"/>
        <dbReference type="ChEBI" id="CHEBI:28938"/>
        <dbReference type="EC" id="3.5.4.5"/>
    </reaction>
</comment>
<comment type="catalytic activity">
    <reaction evidence="1">
        <text>2'-deoxycytidine + H2O + H(+) = 2'-deoxyuridine + NH4(+)</text>
        <dbReference type="Rhea" id="RHEA:13433"/>
        <dbReference type="ChEBI" id="CHEBI:15377"/>
        <dbReference type="ChEBI" id="CHEBI:15378"/>
        <dbReference type="ChEBI" id="CHEBI:15698"/>
        <dbReference type="ChEBI" id="CHEBI:16450"/>
        <dbReference type="ChEBI" id="CHEBI:28938"/>
        <dbReference type="EC" id="3.5.4.5"/>
    </reaction>
</comment>
<comment type="cofactor">
    <cofactor evidence="1">
        <name>Zn(2+)</name>
        <dbReference type="ChEBI" id="CHEBI:29105"/>
    </cofactor>
    <text evidence="1">Binds 1 zinc ion.</text>
</comment>
<comment type="subunit">
    <text evidence="1">Homodimer.</text>
</comment>
<comment type="similarity">
    <text evidence="1">Belongs to the cytidine and deoxycytidylate deaminase family.</text>
</comment>
<protein>
    <recommendedName>
        <fullName evidence="1">Cytidine deaminase</fullName>
        <ecNumber evidence="1">3.5.4.5</ecNumber>
    </recommendedName>
    <alternativeName>
        <fullName evidence="1">Cytidine aminohydrolase</fullName>
        <shortName evidence="1">CDA</shortName>
    </alternativeName>
</protein>
<reference key="1">
    <citation type="journal article" date="2011" name="J. Bacteriol.">
        <title>Comparative genomics of 28 Salmonella enterica isolates: evidence for CRISPR-mediated adaptive sublineage evolution.</title>
        <authorList>
            <person name="Fricke W.F."/>
            <person name="Mammel M.K."/>
            <person name="McDermott P.F."/>
            <person name="Tartera C."/>
            <person name="White D.G."/>
            <person name="Leclerc J.E."/>
            <person name="Ravel J."/>
            <person name="Cebula T.A."/>
        </authorList>
    </citation>
    <scope>NUCLEOTIDE SEQUENCE [LARGE SCALE GENOMIC DNA]</scope>
    <source>
        <strain>SL483</strain>
    </source>
</reference>
<name>CDD_SALA4</name>
<sequence length="294" mass="31618">MHPRFQTAFAQLADNLQSALAPILADHHFPAMLTAEQVSTLKNTAGLDEDALAFALLPLAAACARTDLSHFNVGAIARGVSGNWYFGANMEFLGATMQQTVHAEQSAISHAWLRGEKGLAAVTVNYTPCGHCRQFMNELNSGLDLRIHLPGRAPHTLRDYLPDAFGPKDLEIKTLLMDEQDHGFTLTGDTLTQAAITAANKSHMPYSHSPSGVALECKDGRIFTGSYAENAAFNPTLPPLQGALNLLSLNGYNYADIQRAILAEKGDAALIQWDATAATLKALGCHNIDRVLLG</sequence>